<dbReference type="EMBL" id="AY534247">
    <property type="protein sequence ID" value="AAT07096.1"/>
    <property type="molecule type" value="mRNA"/>
</dbReference>
<dbReference type="EMBL" id="BC137104">
    <property type="protein sequence ID" value="AAI37105.1"/>
    <property type="molecule type" value="mRNA"/>
</dbReference>
<dbReference type="EMBL" id="BC137105">
    <property type="protein sequence ID" value="AAI37106.1"/>
    <property type="molecule type" value="mRNA"/>
</dbReference>
<dbReference type="CCDS" id="CCDS34905.1"/>
<dbReference type="RefSeq" id="NP_001011720.1">
    <property type="nucleotide sequence ID" value="NM_001011720.2"/>
</dbReference>
<dbReference type="RefSeq" id="NP_001274187.1">
    <property type="nucleotide sequence ID" value="NM_001287258.1"/>
</dbReference>
<dbReference type="RefSeq" id="NP_001274188.1">
    <property type="nucleotide sequence ID" value="NM_001287259.2"/>
</dbReference>
<dbReference type="RefSeq" id="NP_001274189.1">
    <property type="nucleotide sequence ID" value="NM_001287260.2"/>
</dbReference>
<dbReference type="RefSeq" id="XP_011515826.1">
    <property type="nucleotide sequence ID" value="XM_011517524.4"/>
</dbReference>
<dbReference type="RefSeq" id="XP_011515827.1">
    <property type="nucleotide sequence ID" value="XM_011517525.3"/>
</dbReference>
<dbReference type="RefSeq" id="XP_016868893.1">
    <property type="nucleotide sequence ID" value="XM_017013404.3"/>
</dbReference>
<dbReference type="RefSeq" id="XP_054216431.1">
    <property type="nucleotide sequence ID" value="XM_054360456.1"/>
</dbReference>
<dbReference type="RefSeq" id="XP_054216432.1">
    <property type="nucleotide sequence ID" value="XM_054360457.1"/>
</dbReference>
<dbReference type="RefSeq" id="XP_054216433.1">
    <property type="nucleotide sequence ID" value="XM_054360458.1"/>
</dbReference>
<dbReference type="SMR" id="Q5GH70"/>
<dbReference type="FunCoup" id="Q5GH70">
    <property type="interactions" value="556"/>
</dbReference>
<dbReference type="STRING" id="9606.ENSP00000386141"/>
<dbReference type="TCDB" id="2.A.112.1.12">
    <property type="family name" value="the kx blood-group antigen (kxa) family"/>
</dbReference>
<dbReference type="iPTMnet" id="Q5GH70"/>
<dbReference type="PhosphoSitePlus" id="Q5GH70"/>
<dbReference type="BioMuta" id="XKR9"/>
<dbReference type="DMDM" id="74707815"/>
<dbReference type="jPOST" id="Q5GH70"/>
<dbReference type="MassIVE" id="Q5GH70"/>
<dbReference type="PaxDb" id="9606-ENSP00000386141"/>
<dbReference type="PeptideAtlas" id="Q5GH70"/>
<dbReference type="Antibodypedia" id="51209">
    <property type="antibodies" value="7 antibodies from 6 providers"/>
</dbReference>
<dbReference type="DNASU" id="389668"/>
<dbReference type="Ensembl" id="ENST00000408926.8">
    <property type="protein sequence ID" value="ENSP00000386141.3"/>
    <property type="gene ID" value="ENSG00000221947.8"/>
</dbReference>
<dbReference type="Ensembl" id="ENST00000520030.5">
    <property type="protein sequence ID" value="ENSP00000431088.1"/>
    <property type="gene ID" value="ENSG00000221947.8"/>
</dbReference>
<dbReference type="GeneID" id="389668"/>
<dbReference type="KEGG" id="hsa:389668"/>
<dbReference type="MANE-Select" id="ENST00000408926.8">
    <property type="protein sequence ID" value="ENSP00000386141.3"/>
    <property type="RefSeq nucleotide sequence ID" value="NM_001011720.2"/>
    <property type="RefSeq protein sequence ID" value="NP_001011720.1"/>
</dbReference>
<dbReference type="UCSC" id="uc003xyq.3">
    <property type="organism name" value="human"/>
</dbReference>
<dbReference type="AGR" id="HGNC:20937"/>
<dbReference type="CTD" id="389668"/>
<dbReference type="DisGeNET" id="389668"/>
<dbReference type="GeneCards" id="XKR9"/>
<dbReference type="HGNC" id="HGNC:20937">
    <property type="gene designation" value="XKR9"/>
</dbReference>
<dbReference type="HPA" id="ENSG00000221947">
    <property type="expression patterns" value="Tissue enhanced (intestine, testis)"/>
</dbReference>
<dbReference type="neXtProt" id="NX_Q5GH70"/>
<dbReference type="OpenTargets" id="ENSG00000221947"/>
<dbReference type="PharmGKB" id="PA142670567"/>
<dbReference type="VEuPathDB" id="HostDB:ENSG00000221947"/>
<dbReference type="eggNOG" id="KOG4790">
    <property type="taxonomic scope" value="Eukaryota"/>
</dbReference>
<dbReference type="GeneTree" id="ENSGT01110000267146"/>
<dbReference type="HOGENOM" id="CLU_028534_2_0_1"/>
<dbReference type="InParanoid" id="Q5GH70"/>
<dbReference type="OMA" id="RDCRMKY"/>
<dbReference type="OrthoDB" id="8190653at2759"/>
<dbReference type="PAN-GO" id="Q5GH70">
    <property type="GO annotations" value="4 GO annotations based on evolutionary models"/>
</dbReference>
<dbReference type="PhylomeDB" id="Q5GH70"/>
<dbReference type="TreeFam" id="TF316454"/>
<dbReference type="PathwayCommons" id="Q5GH70"/>
<dbReference type="BioGRID-ORCS" id="389668">
    <property type="hits" value="17 hits in 1133 CRISPR screens"/>
</dbReference>
<dbReference type="ChiTaRS" id="XKR9">
    <property type="organism name" value="human"/>
</dbReference>
<dbReference type="GenomeRNAi" id="389668"/>
<dbReference type="Pharos" id="Q5GH70">
    <property type="development level" value="Tdark"/>
</dbReference>
<dbReference type="PRO" id="PR:Q5GH70"/>
<dbReference type="Proteomes" id="UP000005640">
    <property type="component" value="Chromosome 8"/>
</dbReference>
<dbReference type="RNAct" id="Q5GH70">
    <property type="molecule type" value="protein"/>
</dbReference>
<dbReference type="Bgee" id="ENSG00000221947">
    <property type="expression patterns" value="Expressed in male germ line stem cell (sensu Vertebrata) in testis and 99 other cell types or tissues"/>
</dbReference>
<dbReference type="ExpressionAtlas" id="Q5GH70">
    <property type="expression patterns" value="baseline and differential"/>
</dbReference>
<dbReference type="GO" id="GO:0016020">
    <property type="term" value="C:membrane"/>
    <property type="evidence" value="ECO:0000318"/>
    <property type="project" value="GO_Central"/>
</dbReference>
<dbReference type="GO" id="GO:0005886">
    <property type="term" value="C:plasma membrane"/>
    <property type="evidence" value="ECO:0007669"/>
    <property type="project" value="UniProtKB-SubCell"/>
</dbReference>
<dbReference type="GO" id="GO:0006915">
    <property type="term" value="P:apoptotic process"/>
    <property type="evidence" value="ECO:0007669"/>
    <property type="project" value="UniProtKB-KW"/>
</dbReference>
<dbReference type="InterPro" id="IPR018629">
    <property type="entry name" value="XK-rel"/>
</dbReference>
<dbReference type="InterPro" id="IPR050895">
    <property type="entry name" value="XK-related_scramblase"/>
</dbReference>
<dbReference type="PANTHER" id="PTHR16024">
    <property type="entry name" value="XK-RELATED PROTEIN"/>
    <property type="match status" value="1"/>
</dbReference>
<dbReference type="PANTHER" id="PTHR16024:SF13">
    <property type="entry name" value="XK-RELATED PROTEIN 9"/>
    <property type="match status" value="1"/>
</dbReference>
<dbReference type="Pfam" id="PF09815">
    <property type="entry name" value="XK-related"/>
    <property type="match status" value="1"/>
</dbReference>
<sequence length="373" mass="43406">MKYTKQNFMMSVLGIIIYVTDLIVDIWVSVRFFHEGQYVFSALALSFMLFGTLVAQCFSYSWFKADLKKAGQESQHCFLLLHCLQGGVFTRYWFALKRGYHAAFKYDSNTSNFVEEQIDLHKEVIDRVTDLSMLRLFETYLEGCPQLILQLYILLEHGQANFSQYAAIMVSCCAISWSTVDYQVALRKSLPDKKLLNGLCPKITYLFYKLFTLLSWMLSVVLLLFLNVKIALFLLLFLWLLGIIWAFKNNTQFCTCISMEFLYRIVVGFILIFTFFNIKGQNTKCPMSCYYIVRVLGTLGILTVFWVCPLTIFNPDYFIPISITIVLTLLLGILFLIVYYGSFHPNRSAETKCDEIDGKPVLRECRMRYFLME</sequence>
<gene>
    <name evidence="4 8" type="primary">XKR9</name>
    <name evidence="5" type="synonym">XRG9</name>
</gene>
<protein>
    <recommendedName>
        <fullName evidence="6">XK-related protein 9</fullName>
        <shortName evidence="4">hXKR9</shortName>
    </recommendedName>
    <component>
        <recommendedName>
            <fullName evidence="1">XK-related protein 9, processed form</fullName>
        </recommendedName>
    </component>
</protein>
<reference key="1">
    <citation type="submission" date="2004-01" db="EMBL/GenBank/DDBJ databases">
        <title>A superfamily of XK-related genes (XRG) widely expressed in vertebrates and invertebrates.</title>
        <authorList>
            <person name="Huang C.-H."/>
            <person name="Chen Y."/>
        </authorList>
    </citation>
    <scope>NUCLEOTIDE SEQUENCE [MRNA]</scope>
</reference>
<reference key="2">
    <citation type="journal article" date="2004" name="Genome Res.">
        <title>The status, quality, and expansion of the NIH full-length cDNA project: the Mammalian Gene Collection (MGC).</title>
        <authorList>
            <consortium name="The MGC Project Team"/>
        </authorList>
    </citation>
    <scope>NUCLEOTIDE SEQUENCE [LARGE SCALE MRNA]</scope>
    <source>
        <tissue>Testis</tissue>
    </source>
</reference>
<reference key="3">
    <citation type="journal article" date="2014" name="J. Biol. Chem.">
        <title>Exposure of phosphatidylserine by Xk-related protein family members during apoptosis.</title>
        <authorList>
            <person name="Suzuki J."/>
            <person name="Imanishi E."/>
            <person name="Nagata S."/>
        </authorList>
    </citation>
    <scope>FUNCTION</scope>
    <scope>CATALYTIC ACTIVITY</scope>
</reference>
<evidence type="ECO:0000250" key="1">
    <source>
        <dbReference type="UniProtKB" id="Q5GH62"/>
    </source>
</evidence>
<evidence type="ECO:0000255" key="2"/>
<evidence type="ECO:0000269" key="3">
    <source>
    </source>
</evidence>
<evidence type="ECO:0000303" key="4">
    <source>
    </source>
</evidence>
<evidence type="ECO:0000303" key="5">
    <source ref="1"/>
</evidence>
<evidence type="ECO:0000305" key="6"/>
<evidence type="ECO:0000305" key="7">
    <source>
    </source>
</evidence>
<evidence type="ECO:0000312" key="8">
    <source>
        <dbReference type="HGNC" id="HGNC:20937"/>
    </source>
</evidence>
<proteinExistence type="evidence at protein level"/>
<keyword id="KW-0053">Apoptosis</keyword>
<keyword id="KW-1003">Cell membrane</keyword>
<keyword id="KW-0472">Membrane</keyword>
<keyword id="KW-1267">Proteomics identification</keyword>
<keyword id="KW-1185">Reference proteome</keyword>
<keyword id="KW-0812">Transmembrane</keyword>
<keyword id="KW-1133">Transmembrane helix</keyword>
<name>XKR9_HUMAN</name>
<accession>Q5GH70</accession>
<accession>B2RNS9</accession>
<accession>B9EH74</accession>
<feature type="chain" id="PRO_0000190796" description="XK-related protein 9">
    <location>
        <begin position="1"/>
        <end position="373"/>
    </location>
</feature>
<feature type="chain" id="PRO_0000453293" description="XK-related protein 9, processed form" evidence="1">
    <location>
        <begin position="1"/>
        <end position="357"/>
    </location>
</feature>
<feature type="transmembrane region" description="Helical" evidence="2">
    <location>
        <begin position="8"/>
        <end position="28"/>
    </location>
</feature>
<feature type="transmembrane region" description="Helical" evidence="2">
    <location>
        <begin position="38"/>
        <end position="58"/>
    </location>
</feature>
<feature type="transmembrane region" description="Helical" evidence="2">
    <location>
        <begin position="166"/>
        <end position="186"/>
    </location>
</feature>
<feature type="transmembrane region" description="Helical" evidence="2">
    <location>
        <begin position="203"/>
        <end position="223"/>
    </location>
</feature>
<feature type="transmembrane region" description="Helical" evidence="2">
    <location>
        <begin position="224"/>
        <end position="244"/>
    </location>
</feature>
<feature type="transmembrane region" description="Helical" evidence="2">
    <location>
        <begin position="256"/>
        <end position="276"/>
    </location>
</feature>
<feature type="transmembrane region" description="Helical" evidence="2">
    <location>
        <begin position="295"/>
        <end position="315"/>
    </location>
</feature>
<feature type="transmembrane region" description="Helical" evidence="2">
    <location>
        <begin position="318"/>
        <end position="338"/>
    </location>
</feature>
<feature type="site" description="Cleavage; by caspase-3, caspase-6 and caspase-7" evidence="1">
    <location>
        <begin position="357"/>
        <end position="358"/>
    </location>
</feature>
<organism>
    <name type="scientific">Homo sapiens</name>
    <name type="common">Human</name>
    <dbReference type="NCBI Taxonomy" id="9606"/>
    <lineage>
        <taxon>Eukaryota</taxon>
        <taxon>Metazoa</taxon>
        <taxon>Chordata</taxon>
        <taxon>Craniata</taxon>
        <taxon>Vertebrata</taxon>
        <taxon>Euteleostomi</taxon>
        <taxon>Mammalia</taxon>
        <taxon>Eutheria</taxon>
        <taxon>Euarchontoglires</taxon>
        <taxon>Primates</taxon>
        <taxon>Haplorrhini</taxon>
        <taxon>Catarrhini</taxon>
        <taxon>Hominidae</taxon>
        <taxon>Homo</taxon>
    </lineage>
</organism>
<comment type="function">
    <molecule>XK-related protein 9, processed form</molecule>
    <text evidence="3">Phospholipid scramblase that promotes phosphatidylserine exposure on apoptotic cell surface (PubMed:25231987). Phosphatidylserine is a specific marker only present at the surface of apoptotic cells and acts as a specific signal for engulfment (PubMed:25231987).</text>
</comment>
<comment type="catalytic activity">
    <molecule>XK-related protein 9, processed form</molecule>
    <reaction evidence="7">
        <text>a 1,2-diacyl-sn-glycero-3-phospho-L-serine(in) = a 1,2-diacyl-sn-glycero-3-phospho-L-serine(out)</text>
        <dbReference type="Rhea" id="RHEA:38663"/>
        <dbReference type="ChEBI" id="CHEBI:57262"/>
    </reaction>
</comment>
<comment type="activity regulation">
    <text evidence="1">Activated upon caspase cleavage to generate the XK-related protein 9, processed form. Does not act prior the onset of apoptosis.</text>
</comment>
<comment type="subcellular location">
    <subcellularLocation>
        <location evidence="1">Cell membrane</location>
        <topology evidence="2">Multi-pass membrane protein</topology>
    </subcellularLocation>
</comment>
<comment type="PTM">
    <molecule>XK-related protein 9</molecule>
    <text evidence="1">Undergoes proteolytic processing by caspase-3 (CASP3), caspase-6 (CASP6) and caspase-7 (CASP7) to generate the XK-related protein 9, processed form, leading to its activation.</text>
</comment>
<comment type="similarity">
    <text evidence="6">Belongs to the XK family.</text>
</comment>